<keyword id="KW-0687">Ribonucleoprotein</keyword>
<keyword id="KW-0689">Ribosomal protein</keyword>
<feature type="chain" id="PRO_1000120131" description="Large ribosomal subunit protein bL32">
    <location>
        <begin position="1"/>
        <end position="48"/>
    </location>
</feature>
<feature type="region of interest" description="Disordered" evidence="2">
    <location>
        <begin position="1"/>
        <end position="20"/>
    </location>
</feature>
<feature type="compositionally biased region" description="Basic residues" evidence="2">
    <location>
        <begin position="9"/>
        <end position="20"/>
    </location>
</feature>
<dbReference type="EMBL" id="CP001072">
    <property type="protein sequence ID" value="ACD47662.1"/>
    <property type="molecule type" value="Genomic_DNA"/>
</dbReference>
<dbReference type="RefSeq" id="WP_000290428.1">
    <property type="nucleotide sequence ID" value="NC_010698.2"/>
</dbReference>
<dbReference type="SMR" id="B2US30"/>
<dbReference type="GeneID" id="31757893"/>
<dbReference type="KEGG" id="hps:HPSH_01025"/>
<dbReference type="HOGENOM" id="CLU_129084_1_2_7"/>
<dbReference type="GO" id="GO:0015934">
    <property type="term" value="C:large ribosomal subunit"/>
    <property type="evidence" value="ECO:0007669"/>
    <property type="project" value="InterPro"/>
</dbReference>
<dbReference type="GO" id="GO:0003735">
    <property type="term" value="F:structural constituent of ribosome"/>
    <property type="evidence" value="ECO:0007669"/>
    <property type="project" value="InterPro"/>
</dbReference>
<dbReference type="GO" id="GO:0006412">
    <property type="term" value="P:translation"/>
    <property type="evidence" value="ECO:0007669"/>
    <property type="project" value="UniProtKB-UniRule"/>
</dbReference>
<dbReference type="HAMAP" id="MF_00340">
    <property type="entry name" value="Ribosomal_bL32"/>
    <property type="match status" value="1"/>
</dbReference>
<dbReference type="InterPro" id="IPR002677">
    <property type="entry name" value="Ribosomal_bL32"/>
</dbReference>
<dbReference type="InterPro" id="IPR011332">
    <property type="entry name" value="Ribosomal_zn-bd"/>
</dbReference>
<dbReference type="NCBIfam" id="TIGR01031">
    <property type="entry name" value="rpmF_bact"/>
    <property type="match status" value="1"/>
</dbReference>
<dbReference type="Pfam" id="PF01783">
    <property type="entry name" value="Ribosomal_L32p"/>
    <property type="match status" value="1"/>
</dbReference>
<dbReference type="SUPFAM" id="SSF57829">
    <property type="entry name" value="Zn-binding ribosomal proteins"/>
    <property type="match status" value="1"/>
</dbReference>
<comment type="similarity">
    <text evidence="1">Belongs to the bacterial ribosomal protein bL32 family.</text>
</comment>
<sequence>MAVPDRRVSKTRAAKRRTHYSVKLAKPIKAKDGTWKLPHHINKFTKEY</sequence>
<name>RL32_HELPS</name>
<organism>
    <name type="scientific">Helicobacter pylori (strain Shi470)</name>
    <dbReference type="NCBI Taxonomy" id="512562"/>
    <lineage>
        <taxon>Bacteria</taxon>
        <taxon>Pseudomonadati</taxon>
        <taxon>Campylobacterota</taxon>
        <taxon>Epsilonproteobacteria</taxon>
        <taxon>Campylobacterales</taxon>
        <taxon>Helicobacteraceae</taxon>
        <taxon>Helicobacter</taxon>
    </lineage>
</organism>
<reference key="1">
    <citation type="submission" date="2008-05" db="EMBL/GenBank/DDBJ databases">
        <title>Genome sequence of Helicobacter pylori from the remote Amazon: traces of Asian ancestry of the first Americans.</title>
        <authorList>
            <person name="Kersulyte D."/>
            <person name="Kalia A."/>
            <person name="Gilman R.H."/>
            <person name="Berg D.E."/>
        </authorList>
    </citation>
    <scope>NUCLEOTIDE SEQUENCE [LARGE SCALE GENOMIC DNA]</scope>
    <source>
        <strain>Shi470</strain>
    </source>
</reference>
<protein>
    <recommendedName>
        <fullName evidence="1">Large ribosomal subunit protein bL32</fullName>
    </recommendedName>
    <alternativeName>
        <fullName evidence="3">50S ribosomal protein L32</fullName>
    </alternativeName>
</protein>
<accession>B2US30</accession>
<evidence type="ECO:0000255" key="1">
    <source>
        <dbReference type="HAMAP-Rule" id="MF_00340"/>
    </source>
</evidence>
<evidence type="ECO:0000256" key="2">
    <source>
        <dbReference type="SAM" id="MobiDB-lite"/>
    </source>
</evidence>
<evidence type="ECO:0000305" key="3"/>
<proteinExistence type="inferred from homology"/>
<gene>
    <name evidence="1" type="primary">rpmF</name>
    <name type="ordered locus">HPSH_01025</name>
</gene>